<evidence type="ECO:0000255" key="1">
    <source>
        <dbReference type="HAMAP-Rule" id="MF_01207"/>
    </source>
</evidence>
<comment type="function">
    <text evidence="1">Part of the MsrPQ system that repairs oxidized periplasmic proteins containing methionine sulfoxide residues (Met-O), using respiratory chain electrons. Thus protects these proteins from oxidative-stress damage caused by reactive species of oxygen and chlorine generated by the host defense mechanisms. MsrPQ is essential for the maintenance of envelope integrity under bleach stress, rescuing a wide series of structurally unrelated periplasmic proteins from methionine oxidation. MsrQ provides electrons for reduction to the reductase catalytic subunit MsrP, using the quinone pool of the respiratory chain.</text>
</comment>
<comment type="cofactor">
    <cofactor evidence="1">
        <name>FMN</name>
        <dbReference type="ChEBI" id="CHEBI:58210"/>
    </cofactor>
    <text evidence="1">Binds 1 FMN per subunit.</text>
</comment>
<comment type="cofactor">
    <cofactor evidence="1">
        <name>heme b</name>
        <dbReference type="ChEBI" id="CHEBI:60344"/>
    </cofactor>
    <text evidence="1">Binds 1 heme b (iron(II)-protoporphyrin IX) group per subunit.</text>
</comment>
<comment type="subunit">
    <text evidence="1">Heterodimer of a catalytic subunit (MsrP) and a heme-binding subunit (MsrQ).</text>
</comment>
<comment type="subcellular location">
    <subcellularLocation>
        <location evidence="1">Cell inner membrane</location>
        <topology evidence="1">Multi-pass membrane protein</topology>
    </subcellularLocation>
</comment>
<comment type="similarity">
    <text evidence="1">Belongs to the MsrQ family.</text>
</comment>
<organism>
    <name type="scientific">Brucella suis biovar 1 (strain 1330)</name>
    <dbReference type="NCBI Taxonomy" id="204722"/>
    <lineage>
        <taxon>Bacteria</taxon>
        <taxon>Pseudomonadati</taxon>
        <taxon>Pseudomonadota</taxon>
        <taxon>Alphaproteobacteria</taxon>
        <taxon>Hyphomicrobiales</taxon>
        <taxon>Brucellaceae</taxon>
        <taxon>Brucella/Ochrobactrum group</taxon>
        <taxon>Brucella</taxon>
    </lineage>
</organism>
<dbReference type="EMBL" id="AE014292">
    <property type="protein sequence ID" value="AAN34160.1"/>
    <property type="molecule type" value="Genomic_DNA"/>
</dbReference>
<dbReference type="EMBL" id="CP002998">
    <property type="protein sequence ID" value="AEM20436.1"/>
    <property type="molecule type" value="Genomic_DNA"/>
</dbReference>
<dbReference type="RefSeq" id="WP_002965660.1">
    <property type="nucleotide sequence ID" value="NZ_KN046805.1"/>
</dbReference>
<dbReference type="SMR" id="Q8FV59"/>
<dbReference type="GeneID" id="93015803"/>
<dbReference type="KEGG" id="bms:BRA0991"/>
<dbReference type="KEGG" id="bsi:BS1330_II0983"/>
<dbReference type="PATRIC" id="fig|204722.21.peg.1133"/>
<dbReference type="HOGENOM" id="CLU_080662_2_0_5"/>
<dbReference type="PhylomeDB" id="Q8FV59"/>
<dbReference type="Proteomes" id="UP000007104">
    <property type="component" value="Chromosome II"/>
</dbReference>
<dbReference type="GO" id="GO:0005886">
    <property type="term" value="C:plasma membrane"/>
    <property type="evidence" value="ECO:0007669"/>
    <property type="project" value="UniProtKB-SubCell"/>
</dbReference>
<dbReference type="GO" id="GO:0009055">
    <property type="term" value="F:electron transfer activity"/>
    <property type="evidence" value="ECO:0007669"/>
    <property type="project" value="UniProtKB-UniRule"/>
</dbReference>
<dbReference type="GO" id="GO:0010181">
    <property type="term" value="F:FMN binding"/>
    <property type="evidence" value="ECO:0007669"/>
    <property type="project" value="UniProtKB-UniRule"/>
</dbReference>
<dbReference type="GO" id="GO:0020037">
    <property type="term" value="F:heme binding"/>
    <property type="evidence" value="ECO:0007669"/>
    <property type="project" value="UniProtKB-UniRule"/>
</dbReference>
<dbReference type="GO" id="GO:0046872">
    <property type="term" value="F:metal ion binding"/>
    <property type="evidence" value="ECO:0007669"/>
    <property type="project" value="UniProtKB-KW"/>
</dbReference>
<dbReference type="GO" id="GO:0016679">
    <property type="term" value="F:oxidoreductase activity, acting on diphenols and related substances as donors"/>
    <property type="evidence" value="ECO:0007669"/>
    <property type="project" value="TreeGrafter"/>
</dbReference>
<dbReference type="GO" id="GO:0030091">
    <property type="term" value="P:protein repair"/>
    <property type="evidence" value="ECO:0007669"/>
    <property type="project" value="UniProtKB-UniRule"/>
</dbReference>
<dbReference type="HAMAP" id="MF_01207">
    <property type="entry name" value="MsrQ"/>
    <property type="match status" value="1"/>
</dbReference>
<dbReference type="InterPro" id="IPR013130">
    <property type="entry name" value="Fe3_Rdtase_TM_dom"/>
</dbReference>
<dbReference type="InterPro" id="IPR022837">
    <property type="entry name" value="MsrQ-like"/>
</dbReference>
<dbReference type="NCBIfam" id="NF003833">
    <property type="entry name" value="PRK05419.1-5"/>
    <property type="match status" value="1"/>
</dbReference>
<dbReference type="PANTHER" id="PTHR36964">
    <property type="entry name" value="PROTEIN-METHIONINE-SULFOXIDE REDUCTASE HEME-BINDING SUBUNIT MSRQ"/>
    <property type="match status" value="1"/>
</dbReference>
<dbReference type="PANTHER" id="PTHR36964:SF1">
    <property type="entry name" value="PROTEIN-METHIONINE-SULFOXIDE REDUCTASE HEME-BINDING SUBUNIT MSRQ"/>
    <property type="match status" value="1"/>
</dbReference>
<dbReference type="Pfam" id="PF01794">
    <property type="entry name" value="Ferric_reduct"/>
    <property type="match status" value="1"/>
</dbReference>
<protein>
    <recommendedName>
        <fullName evidence="1">Protein-methionine-sulfoxide reductase heme-binding subunit MsrQ</fullName>
    </recommendedName>
    <alternativeName>
        <fullName evidence="1">Flavocytochrome MsrQ</fullName>
    </alternativeName>
</protein>
<sequence length="220" mass="24797">MAAATGTRKKKTPRPGQWKLWLLYTAGFVPAVWTFYLGATGQLGADPVKTFEHLLGLWALRFLILTLLVTPIRDLTGITLLRYRRALGLLAFYYALMHFTTYMVLDQGLNLSAIITDIVRRPFITIGMISLALLVPLALTSNNWSIRKLGRRWSSLHKLVYIAIAGSAVHFLMSVKSWPAEPVIYAAIVAALLLWRLARPYLRTRKPALRPRGEAIALRK</sequence>
<proteinExistence type="inferred from homology"/>
<accession>Q8FV59</accession>
<accession>G0KDZ8</accession>
<feature type="chain" id="PRO_0000091571" description="Protein-methionine-sulfoxide reductase heme-binding subunit MsrQ">
    <location>
        <begin position="1"/>
        <end position="220"/>
    </location>
</feature>
<feature type="transmembrane region" description="Helical" evidence="1">
    <location>
        <begin position="20"/>
        <end position="40"/>
    </location>
</feature>
<feature type="transmembrane region" description="Helical" evidence="1">
    <location>
        <begin position="52"/>
        <end position="72"/>
    </location>
</feature>
<feature type="transmembrane region" description="Helical" evidence="1">
    <location>
        <begin position="86"/>
        <end position="106"/>
    </location>
</feature>
<feature type="transmembrane region" description="Helical" evidence="1">
    <location>
        <begin position="122"/>
        <end position="142"/>
    </location>
</feature>
<feature type="transmembrane region" description="Helical" evidence="1">
    <location>
        <begin position="153"/>
        <end position="173"/>
    </location>
</feature>
<feature type="transmembrane region" description="Helical" evidence="1">
    <location>
        <begin position="175"/>
        <end position="195"/>
    </location>
</feature>
<name>MSRQ_BRUSU</name>
<reference key="1">
    <citation type="journal article" date="2002" name="Proc. Natl. Acad. Sci. U.S.A.">
        <title>The Brucella suis genome reveals fundamental similarities between animal and plant pathogens and symbionts.</title>
        <authorList>
            <person name="Paulsen I.T."/>
            <person name="Seshadri R."/>
            <person name="Nelson K.E."/>
            <person name="Eisen J.A."/>
            <person name="Heidelberg J.F."/>
            <person name="Read T.D."/>
            <person name="Dodson R.J."/>
            <person name="Umayam L.A."/>
            <person name="Brinkac L.M."/>
            <person name="Beanan M.J."/>
            <person name="Daugherty S.C."/>
            <person name="DeBoy R.T."/>
            <person name="Durkin A.S."/>
            <person name="Kolonay J.F."/>
            <person name="Madupu R."/>
            <person name="Nelson W.C."/>
            <person name="Ayodeji B."/>
            <person name="Kraul M."/>
            <person name="Shetty J."/>
            <person name="Malek J.A."/>
            <person name="Van Aken S.E."/>
            <person name="Riedmuller S."/>
            <person name="Tettelin H."/>
            <person name="Gill S.R."/>
            <person name="White O."/>
            <person name="Salzberg S.L."/>
            <person name="Hoover D.L."/>
            <person name="Lindler L.E."/>
            <person name="Halling S.M."/>
            <person name="Boyle S.M."/>
            <person name="Fraser C.M."/>
        </authorList>
    </citation>
    <scope>NUCLEOTIDE SEQUENCE [LARGE SCALE GENOMIC DNA]</scope>
    <source>
        <strain>1330</strain>
    </source>
</reference>
<reference key="2">
    <citation type="journal article" date="2011" name="J. Bacteriol.">
        <title>Revised genome sequence of Brucella suis 1330.</title>
        <authorList>
            <person name="Tae H."/>
            <person name="Shallom S."/>
            <person name="Settlage R."/>
            <person name="Preston D."/>
            <person name="Adams L.G."/>
            <person name="Garner H.R."/>
        </authorList>
    </citation>
    <scope>NUCLEOTIDE SEQUENCE [LARGE SCALE GENOMIC DNA]</scope>
    <source>
        <strain>1330</strain>
    </source>
</reference>
<keyword id="KW-0997">Cell inner membrane</keyword>
<keyword id="KW-1003">Cell membrane</keyword>
<keyword id="KW-0249">Electron transport</keyword>
<keyword id="KW-0285">Flavoprotein</keyword>
<keyword id="KW-0288">FMN</keyword>
<keyword id="KW-0349">Heme</keyword>
<keyword id="KW-0408">Iron</keyword>
<keyword id="KW-0472">Membrane</keyword>
<keyword id="KW-0479">Metal-binding</keyword>
<keyword id="KW-0812">Transmembrane</keyword>
<keyword id="KW-1133">Transmembrane helix</keyword>
<keyword id="KW-0813">Transport</keyword>
<gene>
    <name evidence="1" type="primary">msrQ</name>
    <name type="ordered locus">BRA0991</name>
    <name type="ordered locus">BS1330_II0983</name>
</gene>